<organism>
    <name type="scientific">Jannaschia sp. (strain CCS1)</name>
    <dbReference type="NCBI Taxonomy" id="290400"/>
    <lineage>
        <taxon>Bacteria</taxon>
        <taxon>Pseudomonadati</taxon>
        <taxon>Pseudomonadota</taxon>
        <taxon>Alphaproteobacteria</taxon>
        <taxon>Rhodobacterales</taxon>
        <taxon>Roseobacteraceae</taxon>
        <taxon>Jannaschia</taxon>
    </lineage>
</organism>
<reference key="1">
    <citation type="submission" date="2006-02" db="EMBL/GenBank/DDBJ databases">
        <title>Complete sequence of chromosome of Jannaschia sp. CCS1.</title>
        <authorList>
            <consortium name="US DOE Joint Genome Institute"/>
            <person name="Copeland A."/>
            <person name="Lucas S."/>
            <person name="Lapidus A."/>
            <person name="Barry K."/>
            <person name="Detter J.C."/>
            <person name="Glavina del Rio T."/>
            <person name="Hammon N."/>
            <person name="Israni S."/>
            <person name="Pitluck S."/>
            <person name="Brettin T."/>
            <person name="Bruce D."/>
            <person name="Han C."/>
            <person name="Tapia R."/>
            <person name="Gilna P."/>
            <person name="Chertkov O."/>
            <person name="Saunders E."/>
            <person name="Schmutz J."/>
            <person name="Larimer F."/>
            <person name="Land M."/>
            <person name="Kyrpides N."/>
            <person name="Lykidis A."/>
            <person name="Moran M.A."/>
            <person name="Belas R."/>
            <person name="Ye W."/>
            <person name="Buchan A."/>
            <person name="Gonzalez J.M."/>
            <person name="Schell M.A."/>
            <person name="Richardson P."/>
        </authorList>
    </citation>
    <scope>NUCLEOTIDE SEQUENCE [LARGE SCALE GENOMIC DNA]</scope>
    <source>
        <strain>CCS1</strain>
    </source>
</reference>
<keyword id="KW-0328">Glycosyltransferase</keyword>
<keyword id="KW-0479">Metal-binding</keyword>
<keyword id="KW-0671">Queuosine biosynthesis</keyword>
<keyword id="KW-1185">Reference proteome</keyword>
<keyword id="KW-0808">Transferase</keyword>
<keyword id="KW-0819">tRNA processing</keyword>
<keyword id="KW-0862">Zinc</keyword>
<proteinExistence type="inferred from homology"/>
<sequence length="376" mass="41389">MTRASSFRLDATSGKARTGVIQTPRGDIRTPAFMPVGTAATVKAMMPESVAATGADILLGNTYHLMLRPTAERIANLGGLHSFMNWDKPILTDSGGFQVMSLADLRKLTEEGVTFRSHIDGSKHLLSPERSMEIQKLLGSDIVMCFDECPALPADRKALDDSMRLSMRWAARSKEAFGDRPGYALFGIQQGGLEEDLREESAKALREIGFDGYAVGGLAVGEGQAAMFGCLDFAPDQLPTDKPRYLMGVGKPDDIVGAVKRGIDMMDCVLPSRSGRTGQAWTRRGQVNIKNARHADDPRPLDEDCTCPACRNYSRAYLHHVFRAQEMISGMLLTWHNLHYYQELMQTMRDAIAANDFAGFEARFHADRAEGDIVPL</sequence>
<gene>
    <name evidence="1" type="primary">tgt</name>
    <name type="ordered locus">Jann_2520</name>
</gene>
<name>TGT_JANSC</name>
<protein>
    <recommendedName>
        <fullName evidence="1">Queuine tRNA-ribosyltransferase</fullName>
        <ecNumber evidence="1">2.4.2.29</ecNumber>
    </recommendedName>
    <alternativeName>
        <fullName evidence="1">Guanine insertion enzyme</fullName>
    </alternativeName>
    <alternativeName>
        <fullName evidence="1">tRNA-guanine transglycosylase</fullName>
    </alternativeName>
</protein>
<dbReference type="EC" id="2.4.2.29" evidence="1"/>
<dbReference type="EMBL" id="CP000264">
    <property type="protein sequence ID" value="ABD55437.1"/>
    <property type="molecule type" value="Genomic_DNA"/>
</dbReference>
<dbReference type="RefSeq" id="WP_011455641.1">
    <property type="nucleotide sequence ID" value="NC_007802.1"/>
</dbReference>
<dbReference type="SMR" id="Q28PC5"/>
<dbReference type="STRING" id="290400.Jann_2520"/>
<dbReference type="KEGG" id="jan:Jann_2520"/>
<dbReference type="eggNOG" id="COG0343">
    <property type="taxonomic scope" value="Bacteria"/>
</dbReference>
<dbReference type="HOGENOM" id="CLU_022060_0_1_5"/>
<dbReference type="OrthoDB" id="9805417at2"/>
<dbReference type="UniPathway" id="UPA00392"/>
<dbReference type="Proteomes" id="UP000008326">
    <property type="component" value="Chromosome"/>
</dbReference>
<dbReference type="GO" id="GO:0005829">
    <property type="term" value="C:cytosol"/>
    <property type="evidence" value="ECO:0007669"/>
    <property type="project" value="TreeGrafter"/>
</dbReference>
<dbReference type="GO" id="GO:0046872">
    <property type="term" value="F:metal ion binding"/>
    <property type="evidence" value="ECO:0007669"/>
    <property type="project" value="UniProtKB-KW"/>
</dbReference>
<dbReference type="GO" id="GO:0008479">
    <property type="term" value="F:tRNA-guanosine(34) queuine transglycosylase activity"/>
    <property type="evidence" value="ECO:0007669"/>
    <property type="project" value="UniProtKB-UniRule"/>
</dbReference>
<dbReference type="GO" id="GO:0008616">
    <property type="term" value="P:queuosine biosynthetic process"/>
    <property type="evidence" value="ECO:0007669"/>
    <property type="project" value="UniProtKB-UniRule"/>
</dbReference>
<dbReference type="GO" id="GO:0002099">
    <property type="term" value="P:tRNA wobble guanine modification"/>
    <property type="evidence" value="ECO:0007669"/>
    <property type="project" value="TreeGrafter"/>
</dbReference>
<dbReference type="GO" id="GO:0101030">
    <property type="term" value="P:tRNA-guanine transglycosylation"/>
    <property type="evidence" value="ECO:0007669"/>
    <property type="project" value="InterPro"/>
</dbReference>
<dbReference type="FunFam" id="3.20.20.105:FF:000001">
    <property type="entry name" value="Queuine tRNA-ribosyltransferase"/>
    <property type="match status" value="1"/>
</dbReference>
<dbReference type="Gene3D" id="3.20.20.105">
    <property type="entry name" value="Queuine tRNA-ribosyltransferase-like"/>
    <property type="match status" value="1"/>
</dbReference>
<dbReference type="HAMAP" id="MF_00168">
    <property type="entry name" value="Q_tRNA_Tgt"/>
    <property type="match status" value="1"/>
</dbReference>
<dbReference type="InterPro" id="IPR050076">
    <property type="entry name" value="ArchSynthase1/Queuine_TRR"/>
</dbReference>
<dbReference type="InterPro" id="IPR004803">
    <property type="entry name" value="TGT"/>
</dbReference>
<dbReference type="InterPro" id="IPR036511">
    <property type="entry name" value="TGT-like_sf"/>
</dbReference>
<dbReference type="InterPro" id="IPR002616">
    <property type="entry name" value="tRNA_ribo_trans-like"/>
</dbReference>
<dbReference type="NCBIfam" id="TIGR00430">
    <property type="entry name" value="Q_tRNA_tgt"/>
    <property type="match status" value="1"/>
</dbReference>
<dbReference type="NCBIfam" id="TIGR00449">
    <property type="entry name" value="tgt_general"/>
    <property type="match status" value="1"/>
</dbReference>
<dbReference type="PANTHER" id="PTHR46499">
    <property type="entry name" value="QUEUINE TRNA-RIBOSYLTRANSFERASE"/>
    <property type="match status" value="1"/>
</dbReference>
<dbReference type="PANTHER" id="PTHR46499:SF1">
    <property type="entry name" value="QUEUINE TRNA-RIBOSYLTRANSFERASE"/>
    <property type="match status" value="1"/>
</dbReference>
<dbReference type="Pfam" id="PF01702">
    <property type="entry name" value="TGT"/>
    <property type="match status" value="1"/>
</dbReference>
<dbReference type="SUPFAM" id="SSF51713">
    <property type="entry name" value="tRNA-guanine transglycosylase"/>
    <property type="match status" value="1"/>
</dbReference>
<comment type="function">
    <text evidence="1">Catalyzes the base-exchange of a guanine (G) residue with the queuine precursor 7-aminomethyl-7-deazaguanine (PreQ1) at position 34 (anticodon wobble position) in tRNAs with GU(N) anticodons (tRNA-Asp, -Asn, -His and -Tyr). Catalysis occurs through a double-displacement mechanism. The nucleophile active site attacks the C1' of nucleotide 34 to detach the guanine base from the RNA, forming a covalent enzyme-RNA intermediate. The proton acceptor active site deprotonates the incoming PreQ1, allowing a nucleophilic attack on the C1' of the ribose to form the product. After dissociation, two additional enzymatic reactions on the tRNA convert PreQ1 to queuine (Q), resulting in the hypermodified nucleoside queuosine (7-(((4,5-cis-dihydroxy-2-cyclopenten-1-yl)amino)methyl)-7-deazaguanosine).</text>
</comment>
<comment type="catalytic activity">
    <reaction evidence="1">
        <text>7-aminomethyl-7-carbaguanine + guanosine(34) in tRNA = 7-aminomethyl-7-carbaguanosine(34) in tRNA + guanine</text>
        <dbReference type="Rhea" id="RHEA:24104"/>
        <dbReference type="Rhea" id="RHEA-COMP:10341"/>
        <dbReference type="Rhea" id="RHEA-COMP:10342"/>
        <dbReference type="ChEBI" id="CHEBI:16235"/>
        <dbReference type="ChEBI" id="CHEBI:58703"/>
        <dbReference type="ChEBI" id="CHEBI:74269"/>
        <dbReference type="ChEBI" id="CHEBI:82833"/>
        <dbReference type="EC" id="2.4.2.29"/>
    </reaction>
</comment>
<comment type="cofactor">
    <cofactor evidence="1">
        <name>Zn(2+)</name>
        <dbReference type="ChEBI" id="CHEBI:29105"/>
    </cofactor>
    <text evidence="1">Binds 1 zinc ion per subunit.</text>
</comment>
<comment type="pathway">
    <text evidence="1">tRNA modification; tRNA-queuosine biosynthesis.</text>
</comment>
<comment type="subunit">
    <text evidence="1">Homodimer. Within each dimer, one monomer is responsible for RNA recognition and catalysis, while the other monomer binds to the replacement base PreQ1.</text>
</comment>
<comment type="similarity">
    <text evidence="1">Belongs to the queuine tRNA-ribosyltransferase family.</text>
</comment>
<accession>Q28PC5</accession>
<evidence type="ECO:0000255" key="1">
    <source>
        <dbReference type="HAMAP-Rule" id="MF_00168"/>
    </source>
</evidence>
<feature type="chain" id="PRO_1000016806" description="Queuine tRNA-ribosyltransferase">
    <location>
        <begin position="1"/>
        <end position="376"/>
    </location>
</feature>
<feature type="region of interest" description="RNA binding" evidence="1">
    <location>
        <begin position="248"/>
        <end position="254"/>
    </location>
</feature>
<feature type="active site" description="Proton acceptor" evidence="1">
    <location>
        <position position="93"/>
    </location>
</feature>
<feature type="active site" description="Nucleophile" evidence="1">
    <location>
        <position position="267"/>
    </location>
</feature>
<feature type="binding site" evidence="1">
    <location>
        <begin position="93"/>
        <end position="97"/>
    </location>
    <ligand>
        <name>substrate</name>
    </ligand>
</feature>
<feature type="binding site" evidence="1">
    <location>
        <position position="147"/>
    </location>
    <ligand>
        <name>substrate</name>
    </ligand>
</feature>
<feature type="binding site" evidence="1">
    <location>
        <position position="190"/>
    </location>
    <ligand>
        <name>substrate</name>
    </ligand>
</feature>
<feature type="binding site" evidence="1">
    <location>
        <position position="217"/>
    </location>
    <ligand>
        <name>substrate</name>
    </ligand>
</feature>
<feature type="binding site" evidence="1">
    <location>
        <position position="305"/>
    </location>
    <ligand>
        <name>Zn(2+)</name>
        <dbReference type="ChEBI" id="CHEBI:29105"/>
    </ligand>
</feature>
<feature type="binding site" evidence="1">
    <location>
        <position position="307"/>
    </location>
    <ligand>
        <name>Zn(2+)</name>
        <dbReference type="ChEBI" id="CHEBI:29105"/>
    </ligand>
</feature>
<feature type="binding site" evidence="1">
    <location>
        <position position="310"/>
    </location>
    <ligand>
        <name>Zn(2+)</name>
        <dbReference type="ChEBI" id="CHEBI:29105"/>
    </ligand>
</feature>
<feature type="binding site" evidence="1">
    <location>
        <position position="336"/>
    </location>
    <ligand>
        <name>Zn(2+)</name>
        <dbReference type="ChEBI" id="CHEBI:29105"/>
    </ligand>
</feature>